<gene>
    <name evidence="1" type="primary">rpsQ</name>
    <name type="ordered locus">HNE_2842</name>
</gene>
<name>RS17_HYPNA</name>
<proteinExistence type="inferred from homology"/>
<organism>
    <name type="scientific">Hyphomonas neptunium (strain ATCC 15444)</name>
    <dbReference type="NCBI Taxonomy" id="228405"/>
    <lineage>
        <taxon>Bacteria</taxon>
        <taxon>Pseudomonadati</taxon>
        <taxon>Pseudomonadota</taxon>
        <taxon>Alphaproteobacteria</taxon>
        <taxon>Hyphomonadales</taxon>
        <taxon>Hyphomonadaceae</taxon>
        <taxon>Hyphomonas</taxon>
    </lineage>
</organism>
<keyword id="KW-1185">Reference proteome</keyword>
<keyword id="KW-0687">Ribonucleoprotein</keyword>
<keyword id="KW-0689">Ribosomal protein</keyword>
<keyword id="KW-0694">RNA-binding</keyword>
<keyword id="KW-0699">rRNA-binding</keyword>
<sequence>MPKRIMKGVVVSAKQDKTAIVRVERTFTHPMLKKIVRKTNKYHAHDENNVAVEGQTIAIRECAPKSKLKRWEVVAEEGTEA</sequence>
<protein>
    <recommendedName>
        <fullName evidence="1">Small ribosomal subunit protein uS17</fullName>
    </recommendedName>
    <alternativeName>
        <fullName evidence="2">30S ribosomal protein S17</fullName>
    </alternativeName>
</protein>
<accession>Q0BYC3</accession>
<dbReference type="EMBL" id="CP000158">
    <property type="protein sequence ID" value="ABI76785.1"/>
    <property type="molecule type" value="Genomic_DNA"/>
</dbReference>
<dbReference type="RefSeq" id="WP_011647817.1">
    <property type="nucleotide sequence ID" value="NC_008358.1"/>
</dbReference>
<dbReference type="SMR" id="Q0BYC3"/>
<dbReference type="STRING" id="228405.HNE_2842"/>
<dbReference type="KEGG" id="hne:HNE_2842"/>
<dbReference type="eggNOG" id="COG0186">
    <property type="taxonomic scope" value="Bacteria"/>
</dbReference>
<dbReference type="HOGENOM" id="CLU_073626_1_1_5"/>
<dbReference type="Proteomes" id="UP000001959">
    <property type="component" value="Chromosome"/>
</dbReference>
<dbReference type="GO" id="GO:0022627">
    <property type="term" value="C:cytosolic small ribosomal subunit"/>
    <property type="evidence" value="ECO:0007669"/>
    <property type="project" value="TreeGrafter"/>
</dbReference>
<dbReference type="GO" id="GO:0019843">
    <property type="term" value="F:rRNA binding"/>
    <property type="evidence" value="ECO:0007669"/>
    <property type="project" value="UniProtKB-UniRule"/>
</dbReference>
<dbReference type="GO" id="GO:0003735">
    <property type="term" value="F:structural constituent of ribosome"/>
    <property type="evidence" value="ECO:0007669"/>
    <property type="project" value="InterPro"/>
</dbReference>
<dbReference type="GO" id="GO:0006412">
    <property type="term" value="P:translation"/>
    <property type="evidence" value="ECO:0007669"/>
    <property type="project" value="UniProtKB-UniRule"/>
</dbReference>
<dbReference type="CDD" id="cd00364">
    <property type="entry name" value="Ribosomal_uS17"/>
    <property type="match status" value="1"/>
</dbReference>
<dbReference type="Gene3D" id="2.40.50.140">
    <property type="entry name" value="Nucleic acid-binding proteins"/>
    <property type="match status" value="1"/>
</dbReference>
<dbReference type="HAMAP" id="MF_01345_B">
    <property type="entry name" value="Ribosomal_uS17_B"/>
    <property type="match status" value="1"/>
</dbReference>
<dbReference type="InterPro" id="IPR012340">
    <property type="entry name" value="NA-bd_OB-fold"/>
</dbReference>
<dbReference type="InterPro" id="IPR000266">
    <property type="entry name" value="Ribosomal_uS17"/>
</dbReference>
<dbReference type="InterPro" id="IPR019984">
    <property type="entry name" value="Ribosomal_uS17_bact/chlr"/>
</dbReference>
<dbReference type="NCBIfam" id="NF004123">
    <property type="entry name" value="PRK05610.1"/>
    <property type="match status" value="1"/>
</dbReference>
<dbReference type="NCBIfam" id="TIGR03635">
    <property type="entry name" value="uS17_bact"/>
    <property type="match status" value="1"/>
</dbReference>
<dbReference type="PANTHER" id="PTHR10744">
    <property type="entry name" value="40S RIBOSOMAL PROTEIN S11 FAMILY MEMBER"/>
    <property type="match status" value="1"/>
</dbReference>
<dbReference type="PANTHER" id="PTHR10744:SF1">
    <property type="entry name" value="SMALL RIBOSOMAL SUBUNIT PROTEIN US17M"/>
    <property type="match status" value="1"/>
</dbReference>
<dbReference type="Pfam" id="PF00366">
    <property type="entry name" value="Ribosomal_S17"/>
    <property type="match status" value="1"/>
</dbReference>
<dbReference type="PRINTS" id="PR00973">
    <property type="entry name" value="RIBOSOMALS17"/>
</dbReference>
<dbReference type="SUPFAM" id="SSF50249">
    <property type="entry name" value="Nucleic acid-binding proteins"/>
    <property type="match status" value="1"/>
</dbReference>
<feature type="chain" id="PRO_1000054964" description="Small ribosomal subunit protein uS17">
    <location>
        <begin position="1"/>
        <end position="81"/>
    </location>
</feature>
<evidence type="ECO:0000255" key="1">
    <source>
        <dbReference type="HAMAP-Rule" id="MF_01345"/>
    </source>
</evidence>
<evidence type="ECO:0000305" key="2"/>
<comment type="function">
    <text evidence="1">One of the primary rRNA binding proteins, it binds specifically to the 5'-end of 16S ribosomal RNA.</text>
</comment>
<comment type="subunit">
    <text evidence="1">Part of the 30S ribosomal subunit.</text>
</comment>
<comment type="similarity">
    <text evidence="1">Belongs to the universal ribosomal protein uS17 family.</text>
</comment>
<reference key="1">
    <citation type="journal article" date="2006" name="J. Bacteriol.">
        <title>Comparative genomic evidence for a close relationship between the dimorphic prosthecate bacteria Hyphomonas neptunium and Caulobacter crescentus.</title>
        <authorList>
            <person name="Badger J.H."/>
            <person name="Hoover T.R."/>
            <person name="Brun Y.V."/>
            <person name="Weiner R.M."/>
            <person name="Laub M.T."/>
            <person name="Alexandre G."/>
            <person name="Mrazek J."/>
            <person name="Ren Q."/>
            <person name="Paulsen I.T."/>
            <person name="Nelson K.E."/>
            <person name="Khouri H.M."/>
            <person name="Radune D."/>
            <person name="Sosa J."/>
            <person name="Dodson R.J."/>
            <person name="Sullivan S.A."/>
            <person name="Rosovitz M.J."/>
            <person name="Madupu R."/>
            <person name="Brinkac L.M."/>
            <person name="Durkin A.S."/>
            <person name="Daugherty S.C."/>
            <person name="Kothari S.P."/>
            <person name="Giglio M.G."/>
            <person name="Zhou L."/>
            <person name="Haft D.H."/>
            <person name="Selengut J.D."/>
            <person name="Davidsen T.M."/>
            <person name="Yang Q."/>
            <person name="Zafar N."/>
            <person name="Ward N.L."/>
        </authorList>
    </citation>
    <scope>NUCLEOTIDE SEQUENCE [LARGE SCALE GENOMIC DNA]</scope>
    <source>
        <strain>ATCC 15444</strain>
    </source>
</reference>